<accession>A8ZUA2</accession>
<name>ATPE_DESOH</name>
<evidence type="ECO:0000255" key="1">
    <source>
        <dbReference type="HAMAP-Rule" id="MF_00530"/>
    </source>
</evidence>
<comment type="function">
    <text evidence="1">Produces ATP from ADP in the presence of a proton gradient across the membrane.</text>
</comment>
<comment type="subunit">
    <text evidence="1">F-type ATPases have 2 components, CF(1) - the catalytic core - and CF(0) - the membrane proton channel. CF(1) has five subunits: alpha(3), beta(3), gamma(1), delta(1), epsilon(1). CF(0) has three main subunits: a, b and c.</text>
</comment>
<comment type="subcellular location">
    <subcellularLocation>
        <location evidence="1">Cell inner membrane</location>
        <topology evidence="1">Peripheral membrane protein</topology>
    </subcellularLocation>
</comment>
<comment type="similarity">
    <text evidence="1">Belongs to the ATPase epsilon chain family.</text>
</comment>
<reference key="1">
    <citation type="submission" date="2007-10" db="EMBL/GenBank/DDBJ databases">
        <title>Complete sequence of Desulfococcus oleovorans Hxd3.</title>
        <authorList>
            <consortium name="US DOE Joint Genome Institute"/>
            <person name="Copeland A."/>
            <person name="Lucas S."/>
            <person name="Lapidus A."/>
            <person name="Barry K."/>
            <person name="Glavina del Rio T."/>
            <person name="Dalin E."/>
            <person name="Tice H."/>
            <person name="Pitluck S."/>
            <person name="Kiss H."/>
            <person name="Brettin T."/>
            <person name="Bruce D."/>
            <person name="Detter J.C."/>
            <person name="Han C."/>
            <person name="Schmutz J."/>
            <person name="Larimer F."/>
            <person name="Land M."/>
            <person name="Hauser L."/>
            <person name="Kyrpides N."/>
            <person name="Kim E."/>
            <person name="Wawrik B."/>
            <person name="Richardson P."/>
        </authorList>
    </citation>
    <scope>NUCLEOTIDE SEQUENCE [LARGE SCALE GENOMIC DNA]</scope>
    <source>
        <strain>DSM 6200 / JCM 39069 / Hxd3</strain>
    </source>
</reference>
<feature type="chain" id="PRO_1000127848" description="ATP synthase epsilon chain">
    <location>
        <begin position="1"/>
        <end position="133"/>
    </location>
</feature>
<proteinExistence type="inferred from homology"/>
<sequence>MAENLRLEVVTPEKTVVSDDAQIVMAPGVLGEFGVLVNHTPFLTSLMPGALHYKDTGEKEHLLFVSDGFAEVLPDRITVLVESAERKEDIDLQRAEAARERAEKRLESGEDVDFVRAKAALTRAIQRIRVAGA</sequence>
<protein>
    <recommendedName>
        <fullName evidence="1">ATP synthase epsilon chain</fullName>
    </recommendedName>
    <alternativeName>
        <fullName evidence="1">ATP synthase F1 sector epsilon subunit</fullName>
    </alternativeName>
    <alternativeName>
        <fullName evidence="1">F-ATPase epsilon subunit</fullName>
    </alternativeName>
</protein>
<organism>
    <name type="scientific">Desulfosudis oleivorans (strain DSM 6200 / JCM 39069 / Hxd3)</name>
    <name type="common">Desulfococcus oleovorans</name>
    <dbReference type="NCBI Taxonomy" id="96561"/>
    <lineage>
        <taxon>Bacteria</taxon>
        <taxon>Pseudomonadati</taxon>
        <taxon>Thermodesulfobacteriota</taxon>
        <taxon>Desulfobacteria</taxon>
        <taxon>Desulfobacterales</taxon>
        <taxon>Desulfosudaceae</taxon>
        <taxon>Desulfosudis</taxon>
    </lineage>
</organism>
<dbReference type="EMBL" id="CP000859">
    <property type="protein sequence ID" value="ABW66414.1"/>
    <property type="molecule type" value="Genomic_DNA"/>
</dbReference>
<dbReference type="RefSeq" id="WP_012174033.1">
    <property type="nucleotide sequence ID" value="NC_009943.1"/>
</dbReference>
<dbReference type="SMR" id="A8ZUA2"/>
<dbReference type="STRING" id="96561.Dole_0604"/>
<dbReference type="KEGG" id="dol:Dole_0604"/>
<dbReference type="eggNOG" id="COG0355">
    <property type="taxonomic scope" value="Bacteria"/>
</dbReference>
<dbReference type="HOGENOM" id="CLU_084338_2_0_7"/>
<dbReference type="OrthoDB" id="9799969at2"/>
<dbReference type="Proteomes" id="UP000008561">
    <property type="component" value="Chromosome"/>
</dbReference>
<dbReference type="GO" id="GO:0005886">
    <property type="term" value="C:plasma membrane"/>
    <property type="evidence" value="ECO:0007669"/>
    <property type="project" value="UniProtKB-SubCell"/>
</dbReference>
<dbReference type="GO" id="GO:0045259">
    <property type="term" value="C:proton-transporting ATP synthase complex"/>
    <property type="evidence" value="ECO:0007669"/>
    <property type="project" value="UniProtKB-KW"/>
</dbReference>
<dbReference type="GO" id="GO:0005524">
    <property type="term" value="F:ATP binding"/>
    <property type="evidence" value="ECO:0007669"/>
    <property type="project" value="UniProtKB-UniRule"/>
</dbReference>
<dbReference type="GO" id="GO:0046933">
    <property type="term" value="F:proton-transporting ATP synthase activity, rotational mechanism"/>
    <property type="evidence" value="ECO:0007669"/>
    <property type="project" value="UniProtKB-UniRule"/>
</dbReference>
<dbReference type="CDD" id="cd12152">
    <property type="entry name" value="F1-ATPase_delta"/>
    <property type="match status" value="1"/>
</dbReference>
<dbReference type="FunFam" id="1.20.5.440:FF:000001">
    <property type="entry name" value="ATP synthase epsilon chain"/>
    <property type="match status" value="1"/>
</dbReference>
<dbReference type="Gene3D" id="1.20.5.440">
    <property type="entry name" value="ATP synthase delta/epsilon subunit, C-terminal domain"/>
    <property type="match status" value="1"/>
</dbReference>
<dbReference type="Gene3D" id="2.60.15.10">
    <property type="entry name" value="F0F1 ATP synthase delta/epsilon subunit, N-terminal"/>
    <property type="match status" value="1"/>
</dbReference>
<dbReference type="HAMAP" id="MF_00530">
    <property type="entry name" value="ATP_synth_epsil_bac"/>
    <property type="match status" value="1"/>
</dbReference>
<dbReference type="InterPro" id="IPR036794">
    <property type="entry name" value="ATP_F1_dsu/esu_C_sf"/>
</dbReference>
<dbReference type="InterPro" id="IPR001469">
    <property type="entry name" value="ATP_synth_F1_dsu/esu"/>
</dbReference>
<dbReference type="InterPro" id="IPR020546">
    <property type="entry name" value="ATP_synth_F1_dsu/esu_N"/>
</dbReference>
<dbReference type="InterPro" id="IPR020547">
    <property type="entry name" value="ATP_synth_F1_esu_C"/>
</dbReference>
<dbReference type="InterPro" id="IPR036771">
    <property type="entry name" value="ATPsynth_dsu/esu_N"/>
</dbReference>
<dbReference type="NCBIfam" id="TIGR01216">
    <property type="entry name" value="ATP_synt_epsi"/>
    <property type="match status" value="1"/>
</dbReference>
<dbReference type="NCBIfam" id="NF009980">
    <property type="entry name" value="PRK13446.1"/>
    <property type="match status" value="1"/>
</dbReference>
<dbReference type="PANTHER" id="PTHR13822">
    <property type="entry name" value="ATP SYNTHASE DELTA/EPSILON CHAIN"/>
    <property type="match status" value="1"/>
</dbReference>
<dbReference type="PANTHER" id="PTHR13822:SF10">
    <property type="entry name" value="ATP SYNTHASE EPSILON CHAIN, CHLOROPLASTIC"/>
    <property type="match status" value="1"/>
</dbReference>
<dbReference type="Pfam" id="PF00401">
    <property type="entry name" value="ATP-synt_DE"/>
    <property type="match status" value="1"/>
</dbReference>
<dbReference type="Pfam" id="PF02823">
    <property type="entry name" value="ATP-synt_DE_N"/>
    <property type="match status" value="1"/>
</dbReference>
<dbReference type="SUPFAM" id="SSF46604">
    <property type="entry name" value="Epsilon subunit of F1F0-ATP synthase C-terminal domain"/>
    <property type="match status" value="1"/>
</dbReference>
<dbReference type="SUPFAM" id="SSF51344">
    <property type="entry name" value="Epsilon subunit of F1F0-ATP synthase N-terminal domain"/>
    <property type="match status" value="1"/>
</dbReference>
<gene>
    <name evidence="1" type="primary">atpC</name>
    <name type="ordered locus">Dole_0604</name>
</gene>
<keyword id="KW-0066">ATP synthesis</keyword>
<keyword id="KW-0997">Cell inner membrane</keyword>
<keyword id="KW-1003">Cell membrane</keyword>
<keyword id="KW-0139">CF(1)</keyword>
<keyword id="KW-0375">Hydrogen ion transport</keyword>
<keyword id="KW-0406">Ion transport</keyword>
<keyword id="KW-0472">Membrane</keyword>
<keyword id="KW-1185">Reference proteome</keyword>
<keyword id="KW-0813">Transport</keyword>